<feature type="chain" id="PRO_0000446593" description="Short-chain dehydrogenase ptmH">
    <location>
        <begin position="1"/>
        <end position="271"/>
    </location>
</feature>
<feature type="active site" description="Proton acceptor" evidence="3">
    <location>
        <position position="148"/>
    </location>
</feature>
<feature type="active site" description="Lowers pKa of active site Tyr" evidence="2">
    <location>
        <position position="152"/>
    </location>
</feature>
<feature type="binding site" evidence="1">
    <location>
        <position position="8"/>
    </location>
    <ligand>
        <name>NADP(+)</name>
        <dbReference type="ChEBI" id="CHEBI:58349"/>
    </ligand>
</feature>
<feature type="binding site" evidence="1">
    <location>
        <position position="34"/>
    </location>
    <ligand>
        <name>NADP(+)</name>
        <dbReference type="ChEBI" id="CHEBI:58349"/>
    </ligand>
</feature>
<feature type="binding site" evidence="1">
    <location>
        <position position="40"/>
    </location>
    <ligand>
        <name>NADP(+)</name>
        <dbReference type="ChEBI" id="CHEBI:58349"/>
    </ligand>
</feature>
<feature type="binding site" evidence="1">
    <location>
        <position position="56"/>
    </location>
    <ligand>
        <name>NADP(+)</name>
        <dbReference type="ChEBI" id="CHEBI:58349"/>
    </ligand>
</feature>
<feature type="binding site" evidence="2">
    <location>
        <position position="84"/>
    </location>
    <ligand>
        <name>NADP(+)</name>
        <dbReference type="ChEBI" id="CHEBI:58349"/>
    </ligand>
</feature>
<feature type="binding site" evidence="2">
    <location>
        <position position="148"/>
    </location>
    <ligand>
        <name>NADP(+)</name>
        <dbReference type="ChEBI" id="CHEBI:58349"/>
    </ligand>
</feature>
<feature type="binding site" evidence="2">
    <location>
        <position position="152"/>
    </location>
    <ligand>
        <name>NADP(+)</name>
        <dbReference type="ChEBI" id="CHEBI:58349"/>
    </ligand>
</feature>
<feature type="binding site" evidence="2">
    <location>
        <position position="181"/>
    </location>
    <ligand>
        <name>NADP(+)</name>
        <dbReference type="ChEBI" id="CHEBI:58349"/>
    </ligand>
</feature>
<feature type="binding site" evidence="1">
    <location>
        <position position="183"/>
    </location>
    <ligand>
        <name>NADP(+)</name>
        <dbReference type="ChEBI" id="CHEBI:58349"/>
    </ligand>
</feature>
<name>PTMH_PENOH</name>
<sequence length="271" mass="29927">MERRTVLITGCSQGGIGSALAEAFHQRGFHVFATARKTEKMTHLRDLDWMTLIPLDVTQESQISAAVELIQKHTGGTLDYLVNNAGDGYIIPVLDCDQVHGRQIFEVNFWGPLRMIQEFSPLLIAARGTIVNINSVASETLPLWLGIYSSSKAALLALSETLRLELKPFGVQVLSVMTGAVQTMIFQTNYRLPPDSAYVAWEKQIAAQAEGSEQASRMSATVYAERVVGDILNRRGGITYRGQMASFAYWVVALMPRFLRDLVTVKMAGIS</sequence>
<evidence type="ECO:0000250" key="1">
    <source>
        <dbReference type="UniProtKB" id="L0E2Z4"/>
    </source>
</evidence>
<evidence type="ECO:0000250" key="2">
    <source>
        <dbReference type="UniProtKB" id="O93868"/>
    </source>
</evidence>
<evidence type="ECO:0000255" key="3">
    <source>
        <dbReference type="PROSITE-ProRule" id="PRU10001"/>
    </source>
</evidence>
<evidence type="ECO:0000269" key="4">
    <source>
    </source>
</evidence>
<evidence type="ECO:0000303" key="5">
    <source>
    </source>
</evidence>
<evidence type="ECO:0000305" key="6"/>
<comment type="function">
    <text evidence="4">Short-chain dehydrogenase; part of the gene cluster that mediates the biosynthesis of the indole diterpenes penitrems (PubMed:25831977). The geranylgeranyl diphosphate (GGPP) synthase ptmG catalyzes the first step in penitrem biosynthesis via conversion of farnesyl pyrophosphate and isopentyl pyrophosphate into geranylgeranyl pyrophosphate (GGPP) (PubMed:25831977). Condensation of indole-3-glycerol phosphate with GGPP by the prenyl transferase ptmC then forms 3-geranylgeranylindole (3-GGI) (PubMed:25831977). Epoxidation by the FAD-dependent monooxygenase ptmM leads to a epoxidized-GGI that is substrate of the terpene cyclase ptmB for cyclization to yield paspaline (PubMed:25831977). Paspaline is subsequently converted to 13-desoxypaxilline by the cytochrome P450 monooxygenase ptmP, the latter being then converted to paxilline by the cytochrome P450 monooxygenase ptmQ (PubMed:25831977). Paxilline is converted to beta-paxitriol via C-10 ketoreduction by the short-chain dehydrogenase ptmH which can be monoprenylated at the C-20 by the indole diterpene prenyltransferase ptmD (PubMed:25831977). A two-step elimination (acetylation and elimination) process performed by the O-acetyltransferase ptmV and ptmI leads to the production of the prenylated form of penijanthine (PubMed:25831977). The FAD-linked oxidoreductase ptmO then converts the prenylated form of penijanthine into PC-M5 which is in turn transformed into PC-M4 by the aromatic dimethylallyltransferase ptmE (PubMed:25831977). Five sequential oxidative transformations performed by the cytochrome P450 monooxygenases ptmK, ptmU, ptmL, ptmN and ptmJ yield the various penitrem compounds. PtmK, ptmU and ptmM are involved in the formation of the key bicyclic ring of penitrem C via the formation of the intermediates secopenitrem D and penitrem D. PtmL catalyzes the epoxidation of penitrem D and C to yield penitrem B and F, respectively. PtmJ catalyzes the last benzylic hydroxylation to convert penitrem B to prenitrem E and penitrem F to penitrem A (PubMed:25831977).</text>
</comment>
<comment type="pathway">
    <text evidence="4">Secondary metabolite biosynthesis.</text>
</comment>
<comment type="similarity">
    <text evidence="6">Belongs to the short-chain dehydrogenases/reductases (SDR) family.</text>
</comment>
<protein>
    <recommendedName>
        <fullName evidence="5">Short-chain dehydrogenase ptmH</fullName>
        <ecNumber evidence="4">1.1.1.-</ecNumber>
    </recommendedName>
    <alternativeName>
        <fullName evidence="5">Penitrem biosynthesis cluster 1 protein H</fullName>
    </alternativeName>
</protein>
<proteinExistence type="inferred from homology"/>
<reference key="1">
    <citation type="journal article" date="2015" name="Angew. Chem. Int. Ed.">
        <title>Reconstitution of biosynthetic machinery for the synthesis of the highly elaborated indole diterpene penitrem.</title>
        <authorList>
            <person name="Liu C."/>
            <person name="Tagami K."/>
            <person name="Minami A."/>
            <person name="Matsumoto T."/>
            <person name="Frisvad J.C."/>
            <person name="Suzuki H."/>
            <person name="Ishikawa J."/>
            <person name="Gomi K."/>
            <person name="Oikawa H."/>
        </authorList>
    </citation>
    <scope>NUCLEOTIDE SEQUENCE [GENOMIC DNA]</scope>
    <scope>IDENTIFICATION</scope>
    <scope>FUNCTION</scope>
    <scope>PATHWAY</scope>
    <source>
        <strain>ATCC 90288 / AK-40</strain>
    </source>
</reference>
<accession>A0A140JWS5</accession>
<gene>
    <name evidence="5" type="primary">ptmH</name>
</gene>
<keyword id="KW-0521">NADP</keyword>
<keyword id="KW-0560">Oxidoreductase</keyword>
<organism>
    <name type="scientific">Penicillium ochrochloron</name>
    <dbReference type="NCBI Taxonomy" id="69780"/>
    <lineage>
        <taxon>Eukaryota</taxon>
        <taxon>Fungi</taxon>
        <taxon>Dikarya</taxon>
        <taxon>Ascomycota</taxon>
        <taxon>Pezizomycotina</taxon>
        <taxon>Eurotiomycetes</taxon>
        <taxon>Eurotiomycetidae</taxon>
        <taxon>Eurotiales</taxon>
        <taxon>Aspergillaceae</taxon>
        <taxon>Penicillium</taxon>
    </lineage>
</organism>
<dbReference type="EC" id="1.1.1.-" evidence="4"/>
<dbReference type="EMBL" id="LC027936">
    <property type="protein sequence ID" value="BAU61552.1"/>
    <property type="molecule type" value="Genomic_DNA"/>
</dbReference>
<dbReference type="SMR" id="A0A140JWS5"/>
<dbReference type="GO" id="GO:0005783">
    <property type="term" value="C:endoplasmic reticulum"/>
    <property type="evidence" value="ECO:0007669"/>
    <property type="project" value="TreeGrafter"/>
</dbReference>
<dbReference type="GO" id="GO:0005811">
    <property type="term" value="C:lipid droplet"/>
    <property type="evidence" value="ECO:0007669"/>
    <property type="project" value="TreeGrafter"/>
</dbReference>
<dbReference type="GO" id="GO:0000140">
    <property type="term" value="F:acylglycerone-phosphate reductase (NADP+) activity"/>
    <property type="evidence" value="ECO:0007669"/>
    <property type="project" value="TreeGrafter"/>
</dbReference>
<dbReference type="GO" id="GO:0004806">
    <property type="term" value="F:triacylglycerol lipase activity"/>
    <property type="evidence" value="ECO:0007669"/>
    <property type="project" value="TreeGrafter"/>
</dbReference>
<dbReference type="GO" id="GO:0006654">
    <property type="term" value="P:phosphatidic acid biosynthetic process"/>
    <property type="evidence" value="ECO:0007669"/>
    <property type="project" value="TreeGrafter"/>
</dbReference>
<dbReference type="GO" id="GO:0044550">
    <property type="term" value="P:secondary metabolite biosynthetic process"/>
    <property type="evidence" value="ECO:0007669"/>
    <property type="project" value="UniProtKB-ARBA"/>
</dbReference>
<dbReference type="GO" id="GO:0019433">
    <property type="term" value="P:triglyceride catabolic process"/>
    <property type="evidence" value="ECO:0007669"/>
    <property type="project" value="TreeGrafter"/>
</dbReference>
<dbReference type="CDD" id="cd05374">
    <property type="entry name" value="17beta-HSD-like_SDR_c"/>
    <property type="match status" value="1"/>
</dbReference>
<dbReference type="Gene3D" id="3.40.50.720">
    <property type="entry name" value="NAD(P)-binding Rossmann-like Domain"/>
    <property type="match status" value="1"/>
</dbReference>
<dbReference type="InterPro" id="IPR036291">
    <property type="entry name" value="NAD(P)-bd_dom_sf"/>
</dbReference>
<dbReference type="InterPro" id="IPR020904">
    <property type="entry name" value="Sc_DH/Rdtase_CS"/>
</dbReference>
<dbReference type="InterPro" id="IPR002347">
    <property type="entry name" value="SDR_fam"/>
</dbReference>
<dbReference type="PANTHER" id="PTHR44169">
    <property type="entry name" value="NADPH-DEPENDENT 1-ACYLDIHYDROXYACETONE PHOSPHATE REDUCTASE"/>
    <property type="match status" value="1"/>
</dbReference>
<dbReference type="PANTHER" id="PTHR44169:SF6">
    <property type="entry name" value="NADPH-DEPENDENT 1-ACYLDIHYDROXYACETONE PHOSPHATE REDUCTASE"/>
    <property type="match status" value="1"/>
</dbReference>
<dbReference type="Pfam" id="PF00106">
    <property type="entry name" value="adh_short"/>
    <property type="match status" value="1"/>
</dbReference>
<dbReference type="PRINTS" id="PR00081">
    <property type="entry name" value="GDHRDH"/>
</dbReference>
<dbReference type="PRINTS" id="PR00080">
    <property type="entry name" value="SDRFAMILY"/>
</dbReference>
<dbReference type="SUPFAM" id="SSF51735">
    <property type="entry name" value="NAD(P)-binding Rossmann-fold domains"/>
    <property type="match status" value="1"/>
</dbReference>
<dbReference type="PROSITE" id="PS00061">
    <property type="entry name" value="ADH_SHORT"/>
    <property type="match status" value="1"/>
</dbReference>